<comment type="function">
    <text evidence="1 2 7">Diacylglycerol kinase that converts diacylglycerol/DAG into phosphatidic acid/phosphatidate/PA and regulates the respective levels of these two bioactive lipids (PubMed:26748701). Thereby, acts as a central switch between the signaling pathways activated by these second messengers with different cellular targets and opposite effects in numerous biological processes (PubMed:26748701). Within the adrenocorticotropic hormone signaling pathway, produces phosphatidic acid which in turn activates NR5A1 and subsequent steroidogenic gene transcription (By similarity). Also functions downstream of the nerve growth factor signaling pathway being specifically activated in the nucleus by the growth factor (By similarity). Through its diacylglycerol activity also regulates synaptic vesicle endocytosis (PubMed:26748701).</text>
</comment>
<comment type="catalytic activity">
    <reaction evidence="7">
        <text>a 1,2-diacyl-sn-glycerol + ATP = a 1,2-diacyl-sn-glycero-3-phosphate + ADP + H(+)</text>
        <dbReference type="Rhea" id="RHEA:10272"/>
        <dbReference type="ChEBI" id="CHEBI:15378"/>
        <dbReference type="ChEBI" id="CHEBI:17815"/>
        <dbReference type="ChEBI" id="CHEBI:30616"/>
        <dbReference type="ChEBI" id="CHEBI:58608"/>
        <dbReference type="ChEBI" id="CHEBI:456216"/>
        <dbReference type="EC" id="2.7.1.107"/>
    </reaction>
    <physiologicalReaction direction="left-to-right" evidence="7">
        <dbReference type="Rhea" id="RHEA:10273"/>
    </physiologicalReaction>
</comment>
<comment type="catalytic activity">
    <reaction evidence="2">
        <text>a 1-O-alkyl-sn-glycerol + ATP = a 1-O-alkyl-sn-glycero-3-phosphate + ADP + H(+)</text>
        <dbReference type="Rhea" id="RHEA:16937"/>
        <dbReference type="ChEBI" id="CHEBI:15378"/>
        <dbReference type="ChEBI" id="CHEBI:15850"/>
        <dbReference type="ChEBI" id="CHEBI:30616"/>
        <dbReference type="ChEBI" id="CHEBI:58014"/>
        <dbReference type="ChEBI" id="CHEBI:456216"/>
        <dbReference type="EC" id="2.7.1.93"/>
    </reaction>
    <physiologicalReaction direction="left-to-right" evidence="2">
        <dbReference type="Rhea" id="RHEA:16938"/>
    </physiologicalReaction>
</comment>
<comment type="catalytic activity">
    <reaction evidence="2">
        <text>1-O-alkyl-2-acyl-sn-glycerol + ATP = 1-O-alkyl-2-acyl-sn-glycero-3-phosphate + ADP + H(+)</text>
        <dbReference type="Rhea" id="RHEA:44072"/>
        <dbReference type="ChEBI" id="CHEBI:15378"/>
        <dbReference type="ChEBI" id="CHEBI:30616"/>
        <dbReference type="ChEBI" id="CHEBI:52595"/>
        <dbReference type="ChEBI" id="CHEBI:73332"/>
        <dbReference type="ChEBI" id="CHEBI:456216"/>
    </reaction>
    <physiologicalReaction direction="left-to-right" evidence="2">
        <dbReference type="Rhea" id="RHEA:44073"/>
    </physiologicalReaction>
</comment>
<comment type="catalytic activity">
    <reaction evidence="2">
        <text>1,2-di-(9Z-octadecenoyl)-sn-glycerol + ATP = 1,2-di-(9Z-octadecenoyl)-sn-glycero-3-phosphate + ADP + H(+)</text>
        <dbReference type="Rhea" id="RHEA:40327"/>
        <dbReference type="ChEBI" id="CHEBI:15378"/>
        <dbReference type="ChEBI" id="CHEBI:30616"/>
        <dbReference type="ChEBI" id="CHEBI:52333"/>
        <dbReference type="ChEBI" id="CHEBI:74546"/>
        <dbReference type="ChEBI" id="CHEBI:456216"/>
    </reaction>
    <physiologicalReaction direction="left-to-right" evidence="2">
        <dbReference type="Rhea" id="RHEA:40328"/>
    </physiologicalReaction>
</comment>
<comment type="catalytic activity">
    <reaction evidence="2">
        <text>1-O-hexadecyl-sn-glycerol + ATP = 1-O-hexadecyl-sn-glycero-3-phosphate + ADP + H(+)</text>
        <dbReference type="Rhea" id="RHEA:41672"/>
        <dbReference type="ChEBI" id="CHEBI:15378"/>
        <dbReference type="ChEBI" id="CHEBI:30616"/>
        <dbReference type="ChEBI" id="CHEBI:34115"/>
        <dbReference type="ChEBI" id="CHEBI:77580"/>
        <dbReference type="ChEBI" id="CHEBI:456216"/>
    </reaction>
    <physiologicalReaction direction="left-to-right" evidence="2">
        <dbReference type="Rhea" id="RHEA:41673"/>
    </physiologicalReaction>
</comment>
<comment type="catalytic activity">
    <reaction evidence="2">
        <text>1-O-hexadecyl-2-acetyl-sn-glycerol + ATP = 1-O-hexadecyl-2-acetyl-sn-glycero-3-phosphate + ADP + H(+)</text>
        <dbReference type="Rhea" id="RHEA:41676"/>
        <dbReference type="ChEBI" id="CHEBI:15378"/>
        <dbReference type="ChEBI" id="CHEBI:30616"/>
        <dbReference type="ChEBI" id="CHEBI:75936"/>
        <dbReference type="ChEBI" id="CHEBI:78385"/>
        <dbReference type="ChEBI" id="CHEBI:456216"/>
    </reaction>
    <physiologicalReaction direction="left-to-right" evidence="2">
        <dbReference type="Rhea" id="RHEA:41677"/>
    </physiologicalReaction>
</comment>
<comment type="catalytic activity">
    <reaction evidence="2">
        <text>1-octadecanoyl-2-(5Z,8Z,11Z,14Z-eicosatetraenoyl)-sn-glycerol + ATP = 1-octadecanoyl-2-(5Z,8Z,11Z,14Z-eicosatetraenoyl)-sn-glycero-3-phosphate + ADP + H(+)</text>
        <dbReference type="Rhea" id="RHEA:40323"/>
        <dbReference type="ChEBI" id="CHEBI:15378"/>
        <dbReference type="ChEBI" id="CHEBI:30616"/>
        <dbReference type="ChEBI" id="CHEBI:75728"/>
        <dbReference type="ChEBI" id="CHEBI:77091"/>
        <dbReference type="ChEBI" id="CHEBI:456216"/>
    </reaction>
    <physiologicalReaction direction="left-to-right" evidence="2">
        <dbReference type="Rhea" id="RHEA:40324"/>
    </physiologicalReaction>
</comment>
<comment type="activity regulation">
    <text evidence="2">Activated by phosphatidylserine.</text>
</comment>
<comment type="pathway">
    <text evidence="7">Lipid metabolism; glycerolipid metabolism.</text>
</comment>
<comment type="subunit">
    <text evidence="2">Interacts with RHOA (constitutively activated, GTP-bound); the interaction inhibits DGKQ. Interacts with PRKCE. Interacts with PRKCH. Interacts with PLCB1. Interacts with NR5A1; the interaction requires both LXXLL motifs in DGKQ and is required for full phosphatidic acid-mediated activation of NR5A1.</text>
</comment>
<comment type="subcellular location">
    <subcellularLocation>
        <location evidence="2">Cytoplasm</location>
    </subcellularLocation>
    <subcellularLocation>
        <location evidence="7">Cytoplasm</location>
        <location evidence="7">Cytosol</location>
    </subcellularLocation>
    <subcellularLocation>
        <location evidence="2">Cell membrane</location>
    </subcellularLocation>
    <subcellularLocation>
        <location evidence="7">Synapse</location>
    </subcellularLocation>
    <subcellularLocation>
        <location evidence="2">Cytoplasm</location>
        <location evidence="2">Cytoskeleton</location>
    </subcellularLocation>
    <subcellularLocation>
        <location evidence="2">Nucleus</location>
    </subcellularLocation>
    <subcellularLocation>
        <location evidence="2">Nucleus speckle</location>
    </subcellularLocation>
    <subcellularLocation>
        <location evidence="1">Nucleus matrix</location>
    </subcellularLocation>
    <text evidence="1 2">Translocates to the plasma membrane in response to steroid hormone receptor stimulation. Translocation to the plasma membrane is dependent on G-protein coupled receptor stimulation and subsequent activation of PRKCE and probably PRKCH. Translocates to the nucleus in response to thrombin stimulation (By similarity). Association with the nuclear matrix is regulated by nerve growth factor (By similarity).</text>
</comment>
<comment type="alternative products">
    <event type="alternative splicing"/>
    <isoform>
        <id>Q6P5E8-1</id>
        <name>1</name>
        <sequence type="displayed"/>
    </isoform>
    <isoform>
        <id>Q6P5E8-2</id>
        <name>2</name>
        <sequence type="described" ref="VSP_037832"/>
    </isoform>
</comment>
<comment type="tissue specificity">
    <text evidence="7">Widely expressed in all brain regions, including the cortex and hippocampus with a specific expression in neuronal cells (at protein level).</text>
</comment>
<comment type="developmental stage">
    <text evidence="7">Expression increases through development and peaks at postnatal day 14.</text>
</comment>
<comment type="domain">
    <text evidence="2">The L-X-X-L-L repeats are both required for binding and phosphatidic acid-mediated activation of the nuclear receptor NR5A1.</text>
</comment>
<comment type="PTM">
    <text evidence="2">Phosphorylated by PRKCE and PRKCH in vitro.</text>
</comment>
<comment type="disruption phenotype">
    <text evidence="7">Homozygous knockout mice display no overt phenotype with respect to body size, mating, and lifespan.</text>
</comment>
<comment type="similarity">
    <text evidence="9">Belongs to the eukaryotic diacylglycerol kinase family.</text>
</comment>
<feature type="chain" id="PRO_0000381763" description="Diacylglycerol kinase theta">
    <location>
        <begin position="1"/>
        <end position="934"/>
    </location>
</feature>
<feature type="domain" description="Ras-associating" evidence="3">
    <location>
        <begin position="387"/>
        <end position="486"/>
    </location>
</feature>
<feature type="domain" description="DAGKc" evidence="5">
    <location>
        <begin position="576"/>
        <end position="713"/>
    </location>
</feature>
<feature type="zinc finger region" description="Phorbol-ester/DAG-type 1" evidence="4">
    <location>
        <begin position="54"/>
        <end position="102"/>
    </location>
</feature>
<feature type="zinc finger region" description="Phorbol-ester/DAG-type 2" evidence="4">
    <location>
        <begin position="115"/>
        <end position="162"/>
    </location>
</feature>
<feature type="zinc finger region" description="Phorbol-ester/DAG-type 3" evidence="4">
    <location>
        <begin position="177"/>
        <end position="228"/>
    </location>
</feature>
<feature type="region of interest" description="Disordered" evidence="6">
    <location>
        <begin position="1"/>
        <end position="50"/>
    </location>
</feature>
<feature type="region of interest" description="Disordered" evidence="6">
    <location>
        <begin position="905"/>
        <end position="934"/>
    </location>
</feature>
<feature type="short sequence motif" description="LXXLL motif 1" evidence="2">
    <location>
        <begin position="547"/>
        <end position="551"/>
    </location>
</feature>
<feature type="short sequence motif" description="LXXLL motif 2" evidence="2">
    <location>
        <begin position="566"/>
        <end position="570"/>
    </location>
</feature>
<feature type="compositionally biased region" description="Basic residues" evidence="6">
    <location>
        <begin position="905"/>
        <end position="916"/>
    </location>
</feature>
<feature type="modified residue" description="Phosphoserine" evidence="10">
    <location>
        <position position="22"/>
    </location>
</feature>
<feature type="modified residue" description="Phosphoserine" evidence="10">
    <location>
        <position position="26"/>
    </location>
</feature>
<feature type="splice variant" id="VSP_037832" description="In isoform 2." evidence="8">
    <location>
        <begin position="1"/>
        <end position="548"/>
    </location>
</feature>
<protein>
    <recommendedName>
        <fullName>Diacylglycerol kinase theta</fullName>
        <shortName>DAG kinase theta</shortName>
        <ecNumber evidence="7">2.7.1.107</ecNumber>
        <ecNumber evidence="2">2.7.1.93</ecNumber>
    </recommendedName>
    <alternativeName>
        <fullName>Diglyceride kinase theta</fullName>
        <shortName>DGK-theta</shortName>
    </alternativeName>
</protein>
<sequence>MAAAAEPGARTWPGSGSPRLGSPAGSPVLGISGRTRPGSGPERTSRAIGSAAPGHSFRKVTLTKPTFCHLCSDFIWGLAGFLCDVCNFMSHEKCLKQVKTPCTSIAPSLVRVPVAHCFGSLGLYKRKFCVVCRKSLEVPAFRCEVCELHVHPDCVPFACSDCRQCHQDGQQDYDTYHHHWREGNLPSGARCEVCRKTCGSSDVLAGVRCEWCGVQAHSVCSTALAPECTFGRLRSMVLPPSCVRLLSRNFSKMHCFRIPETMVLELGDGDDGVDGSAAIGTGREVLTATESTKQTLKIFDGNDSMRKNQFRLVTVSRLARNEEVMEAALRAYYISEDPKDFQLQALPLSGNAQALGKAGTTEEEASKGSCPRDSVPEAWVIRSLPRTQEILKIYPGWLKVGVAYVSIRVNSQSTARSVVQEVLPLFGQQVEDKERFQLIEVLMSSRQVQRTVLADEEPLLDRLWDIRQTSVRQVSQTRFYVAETRATAPRVSLFVGGLPPGLSPQDYSNLLHEAMATKAAVVSVSHVYSLQGAVILDVTCFAEAERLYMLARDTAVHGRPLTALVLPDVLHTKLPPDCCPLLVFVNPKSGGLKGRELLCSFRKLLNPHQVFELTNGGPLPGFHLFSQVPSFRVLVCGGDGTVGWVLAALEETRRHLACPEPSVAILPLGTGNDLGRVLRWGAGYSGEDPFSVLVSVDEADAVLMDRWTILLDAHEIDSTENNVVETEPPKIVQMNNYCGIGIDAELSLDFHQAREEEPGKFTSRFHNKGVYVRVGLQKISHSRSLHKEIRLQVEQQEVELPSIEGLIFINIPSWGSGADLWGSDNDSRFEKPRIDDGLLEVVGVTGVVHMGQVQGGLRSGIRIAQGSYFRVTLLKATPVQVDGEPWVQAPGHMIISATAPKVHMLRKAKQKPRKAGANRDTRVDTLPAPEGNPL</sequence>
<dbReference type="EC" id="2.7.1.107" evidence="7"/>
<dbReference type="EC" id="2.7.1.93" evidence="2"/>
<dbReference type="EMBL" id="AK134745">
    <property type="protein sequence ID" value="BAE22264.1"/>
    <property type="molecule type" value="mRNA"/>
</dbReference>
<dbReference type="EMBL" id="BC062929">
    <property type="protein sequence ID" value="AAH62929.1"/>
    <property type="molecule type" value="mRNA"/>
</dbReference>
<dbReference type="CCDS" id="CCDS19515.1">
    <molecule id="Q6P5E8-1"/>
</dbReference>
<dbReference type="RefSeq" id="NP_950176.1">
    <molecule id="Q6P5E8-1"/>
    <property type="nucleotide sequence ID" value="NM_199011.2"/>
</dbReference>
<dbReference type="SMR" id="Q6P5E8"/>
<dbReference type="BioGRID" id="225672">
    <property type="interactions" value="2"/>
</dbReference>
<dbReference type="FunCoup" id="Q6P5E8">
    <property type="interactions" value="1482"/>
</dbReference>
<dbReference type="STRING" id="10090.ENSMUSP00000057859"/>
<dbReference type="GlyGen" id="Q6P5E8">
    <property type="glycosylation" value="1 site, 1 N-linked glycan (1 site)"/>
</dbReference>
<dbReference type="iPTMnet" id="Q6P5E8"/>
<dbReference type="PhosphoSitePlus" id="Q6P5E8"/>
<dbReference type="jPOST" id="Q6P5E8"/>
<dbReference type="PaxDb" id="10090-ENSMUSP00000057859"/>
<dbReference type="PeptideAtlas" id="Q6P5E8"/>
<dbReference type="ProteomicsDB" id="279411">
    <molecule id="Q6P5E8-1"/>
</dbReference>
<dbReference type="ProteomicsDB" id="279412">
    <molecule id="Q6P5E8-2"/>
</dbReference>
<dbReference type="Pumba" id="Q6P5E8"/>
<dbReference type="Antibodypedia" id="22185">
    <property type="antibodies" value="221 antibodies from 31 providers"/>
</dbReference>
<dbReference type="DNASU" id="110524"/>
<dbReference type="Ensembl" id="ENSMUST00000053913.13">
    <molecule id="Q6P5E8-1"/>
    <property type="protein sequence ID" value="ENSMUSP00000057859.7"/>
    <property type="gene ID" value="ENSMUSG00000004815.13"/>
</dbReference>
<dbReference type="GeneID" id="110524"/>
<dbReference type="KEGG" id="mmu:110524"/>
<dbReference type="UCSC" id="uc008yot.1">
    <molecule id="Q6P5E8-1"/>
    <property type="organism name" value="mouse"/>
</dbReference>
<dbReference type="UCSC" id="uc012eau.1">
    <molecule id="Q6P5E8-2"/>
    <property type="organism name" value="mouse"/>
</dbReference>
<dbReference type="AGR" id="MGI:102918"/>
<dbReference type="CTD" id="1609"/>
<dbReference type="MGI" id="MGI:102918">
    <property type="gene designation" value="Dgkq"/>
</dbReference>
<dbReference type="VEuPathDB" id="HostDB:ENSMUSG00000004815"/>
<dbReference type="eggNOG" id="KOG1169">
    <property type="taxonomic scope" value="Eukaryota"/>
</dbReference>
<dbReference type="GeneTree" id="ENSGT00940000159492"/>
<dbReference type="HOGENOM" id="CLU_003770_0_0_1"/>
<dbReference type="InParanoid" id="Q6P5E8"/>
<dbReference type="OMA" id="TCKDLWK"/>
<dbReference type="OrthoDB" id="242257at2759"/>
<dbReference type="PhylomeDB" id="Q6P5E8"/>
<dbReference type="TreeFam" id="TF312817"/>
<dbReference type="BRENDA" id="2.7.1.107">
    <property type="organism ID" value="3474"/>
</dbReference>
<dbReference type="Reactome" id="R-MMU-114508">
    <property type="pathway name" value="Effects of PIP2 hydrolysis"/>
</dbReference>
<dbReference type="UniPathway" id="UPA00230"/>
<dbReference type="BioGRID-ORCS" id="110524">
    <property type="hits" value="6 hits in 80 CRISPR screens"/>
</dbReference>
<dbReference type="ChiTaRS" id="Dgkq">
    <property type="organism name" value="mouse"/>
</dbReference>
<dbReference type="PRO" id="PR:Q6P5E8"/>
<dbReference type="Proteomes" id="UP000000589">
    <property type="component" value="Chromosome 5"/>
</dbReference>
<dbReference type="RNAct" id="Q6P5E8">
    <property type="molecule type" value="protein"/>
</dbReference>
<dbReference type="Bgee" id="ENSMUSG00000004815">
    <property type="expression patterns" value="Expressed in primary visual cortex and 127 other cell types or tissues"/>
</dbReference>
<dbReference type="ExpressionAtlas" id="Q6P5E8">
    <property type="expression patterns" value="baseline and differential"/>
</dbReference>
<dbReference type="GO" id="GO:0005856">
    <property type="term" value="C:cytoskeleton"/>
    <property type="evidence" value="ECO:0007669"/>
    <property type="project" value="UniProtKB-SubCell"/>
</dbReference>
<dbReference type="GO" id="GO:0005829">
    <property type="term" value="C:cytosol"/>
    <property type="evidence" value="ECO:0007669"/>
    <property type="project" value="UniProtKB-SubCell"/>
</dbReference>
<dbReference type="GO" id="GO:0005768">
    <property type="term" value="C:endosome"/>
    <property type="evidence" value="ECO:0007669"/>
    <property type="project" value="Ensembl"/>
</dbReference>
<dbReference type="GO" id="GO:0098978">
    <property type="term" value="C:glutamatergic synapse"/>
    <property type="evidence" value="ECO:0000314"/>
    <property type="project" value="SynGO"/>
</dbReference>
<dbReference type="GO" id="GO:0016363">
    <property type="term" value="C:nuclear matrix"/>
    <property type="evidence" value="ECO:0007669"/>
    <property type="project" value="UniProtKB-SubCell"/>
</dbReference>
<dbReference type="GO" id="GO:0016607">
    <property type="term" value="C:nuclear speck"/>
    <property type="evidence" value="ECO:0007669"/>
    <property type="project" value="UniProtKB-SubCell"/>
</dbReference>
<dbReference type="GO" id="GO:0005730">
    <property type="term" value="C:nucleolus"/>
    <property type="evidence" value="ECO:0007669"/>
    <property type="project" value="Ensembl"/>
</dbReference>
<dbReference type="GO" id="GO:0005886">
    <property type="term" value="C:plasma membrane"/>
    <property type="evidence" value="ECO:0007669"/>
    <property type="project" value="UniProtKB-SubCell"/>
</dbReference>
<dbReference type="GO" id="GO:0098794">
    <property type="term" value="C:postsynapse"/>
    <property type="evidence" value="ECO:0000314"/>
    <property type="project" value="SynGO"/>
</dbReference>
<dbReference type="GO" id="GO:0098793">
    <property type="term" value="C:presynapse"/>
    <property type="evidence" value="ECO:0000314"/>
    <property type="project" value="SynGO"/>
</dbReference>
<dbReference type="GO" id="GO:0012506">
    <property type="term" value="C:vesicle membrane"/>
    <property type="evidence" value="ECO:0007669"/>
    <property type="project" value="Ensembl"/>
</dbReference>
<dbReference type="GO" id="GO:0047649">
    <property type="term" value="F:alkylglycerol kinase activity"/>
    <property type="evidence" value="ECO:0007669"/>
    <property type="project" value="RHEA"/>
</dbReference>
<dbReference type="GO" id="GO:0005524">
    <property type="term" value="F:ATP binding"/>
    <property type="evidence" value="ECO:0007669"/>
    <property type="project" value="UniProtKB-KW"/>
</dbReference>
<dbReference type="GO" id="GO:0004143">
    <property type="term" value="F:ATP-dependent diacylglycerol kinase activity"/>
    <property type="evidence" value="ECO:0000250"/>
    <property type="project" value="UniProtKB"/>
</dbReference>
<dbReference type="GO" id="GO:0004697">
    <property type="term" value="F:diacylglycerol-dependent serine/threonine kinase activity"/>
    <property type="evidence" value="ECO:0007669"/>
    <property type="project" value="Ensembl"/>
</dbReference>
<dbReference type="GO" id="GO:0140297">
    <property type="term" value="F:DNA-binding transcription factor binding"/>
    <property type="evidence" value="ECO:0007669"/>
    <property type="project" value="Ensembl"/>
</dbReference>
<dbReference type="GO" id="GO:0043274">
    <property type="term" value="F:phospholipase binding"/>
    <property type="evidence" value="ECO:0007669"/>
    <property type="project" value="Ensembl"/>
</dbReference>
<dbReference type="GO" id="GO:0030971">
    <property type="term" value="F:receptor tyrosine kinase binding"/>
    <property type="evidence" value="ECO:0007669"/>
    <property type="project" value="Ensembl"/>
</dbReference>
<dbReference type="GO" id="GO:0030297">
    <property type="term" value="F:transmembrane receptor protein tyrosine kinase activator activity"/>
    <property type="evidence" value="ECO:0007669"/>
    <property type="project" value="Ensembl"/>
</dbReference>
<dbReference type="GO" id="GO:0008270">
    <property type="term" value="F:zinc ion binding"/>
    <property type="evidence" value="ECO:0007669"/>
    <property type="project" value="UniProtKB-KW"/>
</dbReference>
<dbReference type="GO" id="GO:0007189">
    <property type="term" value="P:adenylate cyclase-activating G protein-coupled receptor signaling pathway"/>
    <property type="evidence" value="ECO:0007669"/>
    <property type="project" value="Ensembl"/>
</dbReference>
<dbReference type="GO" id="GO:1903413">
    <property type="term" value="P:cellular response to bile acid"/>
    <property type="evidence" value="ECO:0007669"/>
    <property type="project" value="Ensembl"/>
</dbReference>
<dbReference type="GO" id="GO:0046339">
    <property type="term" value="P:diacylglycerol metabolic process"/>
    <property type="evidence" value="ECO:0000250"/>
    <property type="project" value="UniProtKB"/>
</dbReference>
<dbReference type="GO" id="GO:0007173">
    <property type="term" value="P:epidermal growth factor receptor signaling pathway"/>
    <property type="evidence" value="ECO:0007669"/>
    <property type="project" value="Ensembl"/>
</dbReference>
<dbReference type="GO" id="GO:0046834">
    <property type="term" value="P:lipid phosphorylation"/>
    <property type="evidence" value="ECO:0000250"/>
    <property type="project" value="UniProtKB"/>
</dbReference>
<dbReference type="GO" id="GO:0010629">
    <property type="term" value="P:negative regulation of gene expression"/>
    <property type="evidence" value="ECO:0007669"/>
    <property type="project" value="Ensembl"/>
</dbReference>
<dbReference type="GO" id="GO:0006654">
    <property type="term" value="P:phosphatidic acid biosynthetic process"/>
    <property type="evidence" value="ECO:0000250"/>
    <property type="project" value="UniProtKB"/>
</dbReference>
<dbReference type="GO" id="GO:0007200">
    <property type="term" value="P:phospholipase C-activating G protein-coupled receptor signaling pathway"/>
    <property type="evidence" value="ECO:0007669"/>
    <property type="project" value="Ensembl"/>
</dbReference>
<dbReference type="GO" id="GO:0010628">
    <property type="term" value="P:positive regulation of gene expression"/>
    <property type="evidence" value="ECO:0007669"/>
    <property type="project" value="Ensembl"/>
</dbReference>
<dbReference type="GO" id="GO:0090037">
    <property type="term" value="P:positive regulation of protein kinase C signaling"/>
    <property type="evidence" value="ECO:0007669"/>
    <property type="project" value="Ensembl"/>
</dbReference>
<dbReference type="GO" id="GO:0090181">
    <property type="term" value="P:regulation of cholesterol metabolic process"/>
    <property type="evidence" value="ECO:0007669"/>
    <property type="project" value="Ensembl"/>
</dbReference>
<dbReference type="GO" id="GO:2000064">
    <property type="term" value="P:regulation of cortisol biosynthetic process"/>
    <property type="evidence" value="ECO:0007669"/>
    <property type="project" value="Ensembl"/>
</dbReference>
<dbReference type="GO" id="GO:0006111">
    <property type="term" value="P:regulation of gluconeogenesis"/>
    <property type="evidence" value="ECO:0007669"/>
    <property type="project" value="Ensembl"/>
</dbReference>
<dbReference type="GO" id="GO:2000182">
    <property type="term" value="P:regulation of progesterone biosynthetic process"/>
    <property type="evidence" value="ECO:0007669"/>
    <property type="project" value="Ensembl"/>
</dbReference>
<dbReference type="GO" id="GO:1900242">
    <property type="term" value="P:regulation of synaptic vesicle endocytosis"/>
    <property type="evidence" value="ECO:0000314"/>
    <property type="project" value="SynGO"/>
</dbReference>
<dbReference type="GO" id="GO:1903432">
    <property type="term" value="P:regulation of TORC1 signaling"/>
    <property type="evidence" value="ECO:0007669"/>
    <property type="project" value="Ensembl"/>
</dbReference>
<dbReference type="GO" id="GO:0006357">
    <property type="term" value="P:regulation of transcription by RNA polymerase II"/>
    <property type="evidence" value="ECO:0007669"/>
    <property type="project" value="Ensembl"/>
</dbReference>
<dbReference type="GO" id="GO:0051591">
    <property type="term" value="P:response to cAMP"/>
    <property type="evidence" value="ECO:0007669"/>
    <property type="project" value="Ensembl"/>
</dbReference>
<dbReference type="GO" id="GO:0070493">
    <property type="term" value="P:thrombin-activated receptor signaling pathway"/>
    <property type="evidence" value="ECO:0007669"/>
    <property type="project" value="Ensembl"/>
</dbReference>
<dbReference type="CDD" id="cd20803">
    <property type="entry name" value="C1_DGKtheta_typeV_rpt1"/>
    <property type="match status" value="1"/>
</dbReference>
<dbReference type="CDD" id="cd20804">
    <property type="entry name" value="C1_DGKtheta_typeV_rpt2"/>
    <property type="match status" value="1"/>
</dbReference>
<dbReference type="CDD" id="cd20854">
    <property type="entry name" value="C1_DGKtheta_typeV_rpt3"/>
    <property type="match status" value="1"/>
</dbReference>
<dbReference type="CDD" id="cd17111">
    <property type="entry name" value="RA1_DAGK-theta"/>
    <property type="match status" value="1"/>
</dbReference>
<dbReference type="CDD" id="cd01783">
    <property type="entry name" value="RA2_DAGK-theta"/>
    <property type="match status" value="1"/>
</dbReference>
<dbReference type="FunFam" id="2.60.200.40:FF:000004">
    <property type="entry name" value="Diacylglycerol kinase"/>
    <property type="match status" value="1"/>
</dbReference>
<dbReference type="FunFam" id="3.10.20.90:FF:000188">
    <property type="entry name" value="Diacylglycerol kinase"/>
    <property type="match status" value="1"/>
</dbReference>
<dbReference type="FunFam" id="3.30.60.20:FF:000002">
    <property type="entry name" value="Diacylglycerol kinase"/>
    <property type="match status" value="1"/>
</dbReference>
<dbReference type="FunFam" id="3.30.60.20:FF:000053">
    <property type="entry name" value="Diacylglycerol kinase"/>
    <property type="match status" value="1"/>
</dbReference>
<dbReference type="FunFam" id="3.40.50.10330:FF:000012">
    <property type="entry name" value="Diacylglycerol kinase"/>
    <property type="match status" value="1"/>
</dbReference>
<dbReference type="Gene3D" id="2.60.200.40">
    <property type="match status" value="1"/>
</dbReference>
<dbReference type="Gene3D" id="3.30.60.20">
    <property type="match status" value="2"/>
</dbReference>
<dbReference type="Gene3D" id="3.10.20.90">
    <property type="entry name" value="Phosphatidylinositol 3-kinase Catalytic Subunit, Chain A, domain 1"/>
    <property type="match status" value="1"/>
</dbReference>
<dbReference type="Gene3D" id="3.40.50.10330">
    <property type="entry name" value="Probable inorganic polyphosphate/atp-NAD kinase, domain 1"/>
    <property type="match status" value="1"/>
</dbReference>
<dbReference type="InterPro" id="IPR017438">
    <property type="entry name" value="ATP-NAD_kinase_N"/>
</dbReference>
<dbReference type="InterPro" id="IPR046349">
    <property type="entry name" value="C1-like_sf"/>
</dbReference>
<dbReference type="InterPro" id="IPR020454">
    <property type="entry name" value="DAG/PE-bd"/>
</dbReference>
<dbReference type="InterPro" id="IPR037607">
    <property type="entry name" value="DGK"/>
</dbReference>
<dbReference type="InterPro" id="IPR056392">
    <property type="entry name" value="DGKtheta_RBD"/>
</dbReference>
<dbReference type="InterPro" id="IPR000756">
    <property type="entry name" value="Diacylglycerol_kin_accessory"/>
</dbReference>
<dbReference type="InterPro" id="IPR001206">
    <property type="entry name" value="Diacylglycerol_kinase_cat_dom"/>
</dbReference>
<dbReference type="InterPro" id="IPR016064">
    <property type="entry name" value="NAD/diacylglycerol_kinase_sf"/>
</dbReference>
<dbReference type="InterPro" id="IPR002219">
    <property type="entry name" value="PE/DAG-bd"/>
</dbReference>
<dbReference type="InterPro" id="IPR000159">
    <property type="entry name" value="RA_dom"/>
</dbReference>
<dbReference type="InterPro" id="IPR029071">
    <property type="entry name" value="Ubiquitin-like_domsf"/>
</dbReference>
<dbReference type="PANTHER" id="PTHR11255">
    <property type="entry name" value="DIACYLGLYCEROL KINASE"/>
    <property type="match status" value="1"/>
</dbReference>
<dbReference type="PANTHER" id="PTHR11255:SF54">
    <property type="entry name" value="DIACYLGLYCEROL KINASE THETA"/>
    <property type="match status" value="1"/>
</dbReference>
<dbReference type="Pfam" id="PF00130">
    <property type="entry name" value="C1_1"/>
    <property type="match status" value="2"/>
</dbReference>
<dbReference type="Pfam" id="PF00609">
    <property type="entry name" value="DAGK_acc"/>
    <property type="match status" value="1"/>
</dbReference>
<dbReference type="Pfam" id="PF00781">
    <property type="entry name" value="DAGK_cat"/>
    <property type="match status" value="1"/>
</dbReference>
<dbReference type="Pfam" id="PF00788">
    <property type="entry name" value="RA"/>
    <property type="match status" value="1"/>
</dbReference>
<dbReference type="Pfam" id="PF24099">
    <property type="entry name" value="RBD_DGKtheta"/>
    <property type="match status" value="1"/>
</dbReference>
<dbReference type="PRINTS" id="PR00008">
    <property type="entry name" value="DAGPEDOMAIN"/>
</dbReference>
<dbReference type="SMART" id="SM00109">
    <property type="entry name" value="C1"/>
    <property type="match status" value="3"/>
</dbReference>
<dbReference type="SMART" id="SM00045">
    <property type="entry name" value="DAGKa"/>
    <property type="match status" value="1"/>
</dbReference>
<dbReference type="SMART" id="SM00046">
    <property type="entry name" value="DAGKc"/>
    <property type="match status" value="1"/>
</dbReference>
<dbReference type="SMART" id="SM00314">
    <property type="entry name" value="RA"/>
    <property type="match status" value="1"/>
</dbReference>
<dbReference type="SUPFAM" id="SSF57889">
    <property type="entry name" value="Cysteine-rich domain"/>
    <property type="match status" value="3"/>
</dbReference>
<dbReference type="SUPFAM" id="SSF111331">
    <property type="entry name" value="NAD kinase/diacylglycerol kinase-like"/>
    <property type="match status" value="1"/>
</dbReference>
<dbReference type="SUPFAM" id="SSF54236">
    <property type="entry name" value="Ubiquitin-like"/>
    <property type="match status" value="2"/>
</dbReference>
<dbReference type="PROSITE" id="PS50146">
    <property type="entry name" value="DAGK"/>
    <property type="match status" value="1"/>
</dbReference>
<dbReference type="PROSITE" id="PS50200">
    <property type="entry name" value="RA"/>
    <property type="match status" value="1"/>
</dbReference>
<dbReference type="PROSITE" id="PS00479">
    <property type="entry name" value="ZF_DAG_PE_1"/>
    <property type="match status" value="3"/>
</dbReference>
<dbReference type="PROSITE" id="PS50081">
    <property type="entry name" value="ZF_DAG_PE_2"/>
    <property type="match status" value="3"/>
</dbReference>
<name>DGKQ_MOUSE</name>
<organism>
    <name type="scientific">Mus musculus</name>
    <name type="common">Mouse</name>
    <dbReference type="NCBI Taxonomy" id="10090"/>
    <lineage>
        <taxon>Eukaryota</taxon>
        <taxon>Metazoa</taxon>
        <taxon>Chordata</taxon>
        <taxon>Craniata</taxon>
        <taxon>Vertebrata</taxon>
        <taxon>Euteleostomi</taxon>
        <taxon>Mammalia</taxon>
        <taxon>Eutheria</taxon>
        <taxon>Euarchontoglires</taxon>
        <taxon>Glires</taxon>
        <taxon>Rodentia</taxon>
        <taxon>Myomorpha</taxon>
        <taxon>Muroidea</taxon>
        <taxon>Muridae</taxon>
        <taxon>Murinae</taxon>
        <taxon>Mus</taxon>
        <taxon>Mus</taxon>
    </lineage>
</organism>
<proteinExistence type="evidence at protein level"/>
<accession>Q6P5E8</accession>
<accession>Q3UYE8</accession>
<gene>
    <name type="primary">Dgkq</name>
</gene>
<evidence type="ECO:0000250" key="1">
    <source>
        <dbReference type="UniProtKB" id="D3ZEY4"/>
    </source>
</evidence>
<evidence type="ECO:0000250" key="2">
    <source>
        <dbReference type="UniProtKB" id="P52824"/>
    </source>
</evidence>
<evidence type="ECO:0000255" key="3">
    <source>
        <dbReference type="PROSITE-ProRule" id="PRU00166"/>
    </source>
</evidence>
<evidence type="ECO:0000255" key="4">
    <source>
        <dbReference type="PROSITE-ProRule" id="PRU00226"/>
    </source>
</evidence>
<evidence type="ECO:0000255" key="5">
    <source>
        <dbReference type="PROSITE-ProRule" id="PRU00783"/>
    </source>
</evidence>
<evidence type="ECO:0000256" key="6">
    <source>
        <dbReference type="SAM" id="MobiDB-lite"/>
    </source>
</evidence>
<evidence type="ECO:0000269" key="7">
    <source>
    </source>
</evidence>
<evidence type="ECO:0000303" key="8">
    <source>
    </source>
</evidence>
<evidence type="ECO:0000305" key="9"/>
<evidence type="ECO:0007744" key="10">
    <source>
    </source>
</evidence>
<reference key="1">
    <citation type="journal article" date="2005" name="Science">
        <title>The transcriptional landscape of the mammalian genome.</title>
        <authorList>
            <person name="Carninci P."/>
            <person name="Kasukawa T."/>
            <person name="Katayama S."/>
            <person name="Gough J."/>
            <person name="Frith M.C."/>
            <person name="Maeda N."/>
            <person name="Oyama R."/>
            <person name="Ravasi T."/>
            <person name="Lenhard B."/>
            <person name="Wells C."/>
            <person name="Kodzius R."/>
            <person name="Shimokawa K."/>
            <person name="Bajic V.B."/>
            <person name="Brenner S.E."/>
            <person name="Batalov S."/>
            <person name="Forrest A.R."/>
            <person name="Zavolan M."/>
            <person name="Davis M.J."/>
            <person name="Wilming L.G."/>
            <person name="Aidinis V."/>
            <person name="Allen J.E."/>
            <person name="Ambesi-Impiombato A."/>
            <person name="Apweiler R."/>
            <person name="Aturaliya R.N."/>
            <person name="Bailey T.L."/>
            <person name="Bansal M."/>
            <person name="Baxter L."/>
            <person name="Beisel K.W."/>
            <person name="Bersano T."/>
            <person name="Bono H."/>
            <person name="Chalk A.M."/>
            <person name="Chiu K.P."/>
            <person name="Choudhary V."/>
            <person name="Christoffels A."/>
            <person name="Clutterbuck D.R."/>
            <person name="Crowe M.L."/>
            <person name="Dalla E."/>
            <person name="Dalrymple B.P."/>
            <person name="de Bono B."/>
            <person name="Della Gatta G."/>
            <person name="di Bernardo D."/>
            <person name="Down T."/>
            <person name="Engstrom P."/>
            <person name="Fagiolini M."/>
            <person name="Faulkner G."/>
            <person name="Fletcher C.F."/>
            <person name="Fukushima T."/>
            <person name="Furuno M."/>
            <person name="Futaki S."/>
            <person name="Gariboldi M."/>
            <person name="Georgii-Hemming P."/>
            <person name="Gingeras T.R."/>
            <person name="Gojobori T."/>
            <person name="Green R.E."/>
            <person name="Gustincich S."/>
            <person name="Harbers M."/>
            <person name="Hayashi Y."/>
            <person name="Hensch T.K."/>
            <person name="Hirokawa N."/>
            <person name="Hill D."/>
            <person name="Huminiecki L."/>
            <person name="Iacono M."/>
            <person name="Ikeo K."/>
            <person name="Iwama A."/>
            <person name="Ishikawa T."/>
            <person name="Jakt M."/>
            <person name="Kanapin A."/>
            <person name="Katoh M."/>
            <person name="Kawasawa Y."/>
            <person name="Kelso J."/>
            <person name="Kitamura H."/>
            <person name="Kitano H."/>
            <person name="Kollias G."/>
            <person name="Krishnan S.P."/>
            <person name="Kruger A."/>
            <person name="Kummerfeld S.K."/>
            <person name="Kurochkin I.V."/>
            <person name="Lareau L.F."/>
            <person name="Lazarevic D."/>
            <person name="Lipovich L."/>
            <person name="Liu J."/>
            <person name="Liuni S."/>
            <person name="McWilliam S."/>
            <person name="Madan Babu M."/>
            <person name="Madera M."/>
            <person name="Marchionni L."/>
            <person name="Matsuda H."/>
            <person name="Matsuzawa S."/>
            <person name="Miki H."/>
            <person name="Mignone F."/>
            <person name="Miyake S."/>
            <person name="Morris K."/>
            <person name="Mottagui-Tabar S."/>
            <person name="Mulder N."/>
            <person name="Nakano N."/>
            <person name="Nakauchi H."/>
            <person name="Ng P."/>
            <person name="Nilsson R."/>
            <person name="Nishiguchi S."/>
            <person name="Nishikawa S."/>
            <person name="Nori F."/>
            <person name="Ohara O."/>
            <person name="Okazaki Y."/>
            <person name="Orlando V."/>
            <person name="Pang K.C."/>
            <person name="Pavan W.J."/>
            <person name="Pavesi G."/>
            <person name="Pesole G."/>
            <person name="Petrovsky N."/>
            <person name="Piazza S."/>
            <person name="Reed J."/>
            <person name="Reid J.F."/>
            <person name="Ring B.Z."/>
            <person name="Ringwald M."/>
            <person name="Rost B."/>
            <person name="Ruan Y."/>
            <person name="Salzberg S.L."/>
            <person name="Sandelin A."/>
            <person name="Schneider C."/>
            <person name="Schoenbach C."/>
            <person name="Sekiguchi K."/>
            <person name="Semple C.A."/>
            <person name="Seno S."/>
            <person name="Sessa L."/>
            <person name="Sheng Y."/>
            <person name="Shibata Y."/>
            <person name="Shimada H."/>
            <person name="Shimada K."/>
            <person name="Silva D."/>
            <person name="Sinclair B."/>
            <person name="Sperling S."/>
            <person name="Stupka E."/>
            <person name="Sugiura K."/>
            <person name="Sultana R."/>
            <person name="Takenaka Y."/>
            <person name="Taki K."/>
            <person name="Tammoja K."/>
            <person name="Tan S.L."/>
            <person name="Tang S."/>
            <person name="Taylor M.S."/>
            <person name="Tegner J."/>
            <person name="Teichmann S.A."/>
            <person name="Ueda H.R."/>
            <person name="van Nimwegen E."/>
            <person name="Verardo R."/>
            <person name="Wei C.L."/>
            <person name="Yagi K."/>
            <person name="Yamanishi H."/>
            <person name="Zabarovsky E."/>
            <person name="Zhu S."/>
            <person name="Zimmer A."/>
            <person name="Hide W."/>
            <person name="Bult C."/>
            <person name="Grimmond S.M."/>
            <person name="Teasdale R.D."/>
            <person name="Liu E.T."/>
            <person name="Brusic V."/>
            <person name="Quackenbush J."/>
            <person name="Wahlestedt C."/>
            <person name="Mattick J.S."/>
            <person name="Hume D.A."/>
            <person name="Kai C."/>
            <person name="Sasaki D."/>
            <person name="Tomaru Y."/>
            <person name="Fukuda S."/>
            <person name="Kanamori-Katayama M."/>
            <person name="Suzuki M."/>
            <person name="Aoki J."/>
            <person name="Arakawa T."/>
            <person name="Iida J."/>
            <person name="Imamura K."/>
            <person name="Itoh M."/>
            <person name="Kato T."/>
            <person name="Kawaji H."/>
            <person name="Kawagashira N."/>
            <person name="Kawashima T."/>
            <person name="Kojima M."/>
            <person name="Kondo S."/>
            <person name="Konno H."/>
            <person name="Nakano K."/>
            <person name="Ninomiya N."/>
            <person name="Nishio T."/>
            <person name="Okada M."/>
            <person name="Plessy C."/>
            <person name="Shibata K."/>
            <person name="Shiraki T."/>
            <person name="Suzuki S."/>
            <person name="Tagami M."/>
            <person name="Waki K."/>
            <person name="Watahiki A."/>
            <person name="Okamura-Oho Y."/>
            <person name="Suzuki H."/>
            <person name="Kawai J."/>
            <person name="Hayashizaki Y."/>
        </authorList>
    </citation>
    <scope>NUCLEOTIDE SEQUENCE [LARGE SCALE MRNA] (ISOFORM 2)</scope>
    <source>
        <strain>C57BL/6J</strain>
        <tissue>Medulla oblongata</tissue>
    </source>
</reference>
<reference key="2">
    <citation type="journal article" date="2004" name="Genome Res.">
        <title>The status, quality, and expansion of the NIH full-length cDNA project: the Mammalian Gene Collection (MGC).</title>
        <authorList>
            <consortium name="The MGC Project Team"/>
        </authorList>
    </citation>
    <scope>NUCLEOTIDE SEQUENCE [LARGE SCALE MRNA] (ISOFORM 1)</scope>
    <source>
        <strain>C57BL/6J</strain>
        <tissue>Brain</tissue>
    </source>
</reference>
<reference key="3">
    <citation type="journal article" date="2010" name="Cell">
        <title>A tissue-specific atlas of mouse protein phosphorylation and expression.</title>
        <authorList>
            <person name="Huttlin E.L."/>
            <person name="Jedrychowski M.P."/>
            <person name="Elias J.E."/>
            <person name="Goswami T."/>
            <person name="Rad R."/>
            <person name="Beausoleil S.A."/>
            <person name="Villen J."/>
            <person name="Haas W."/>
            <person name="Sowa M.E."/>
            <person name="Gygi S.P."/>
        </authorList>
    </citation>
    <scope>PHOSPHORYLATION [LARGE SCALE ANALYSIS] AT SER-22 AND SER-26</scope>
    <scope>IDENTIFICATION BY MASS SPECTROMETRY [LARGE SCALE ANALYSIS]</scope>
    <source>
        <tissue>Brain</tissue>
        <tissue>Brown adipose tissue</tissue>
        <tissue>Heart</tissue>
        <tissue>Kidney</tissue>
        <tissue>Lung</tissue>
        <tissue>Pancreas</tissue>
        <tissue>Spleen</tissue>
    </source>
</reference>
<reference key="4">
    <citation type="journal article" date="2016" name="Cell Rep.">
        <title>DGKtheta Catalytic Activity Is Required for Efficient Recycling of Presynaptic Vesicles at Excitatory Synapses.</title>
        <authorList>
            <person name="Goldschmidt H.L."/>
            <person name="Tu-Sekine B."/>
            <person name="Volk L."/>
            <person name="Anggono V."/>
            <person name="Huganir R.L."/>
            <person name="Raben D.M."/>
        </authorList>
    </citation>
    <scope>FUNCTION</scope>
    <scope>CATALYTIC ACTIVITY</scope>
    <scope>PATHWAY</scope>
    <scope>SUBCELLULAR LOCATION</scope>
    <scope>TISSUE SPECIFICITY</scope>
    <scope>DEVELOPMENTAL STAGE</scope>
    <scope>DISRUPTION PHENOTYPE</scope>
</reference>
<keyword id="KW-0025">Alternative splicing</keyword>
<keyword id="KW-0067">ATP-binding</keyword>
<keyword id="KW-1003">Cell membrane</keyword>
<keyword id="KW-0963">Cytoplasm</keyword>
<keyword id="KW-0206">Cytoskeleton</keyword>
<keyword id="KW-0418">Kinase</keyword>
<keyword id="KW-0443">Lipid metabolism</keyword>
<keyword id="KW-0472">Membrane</keyword>
<keyword id="KW-0479">Metal-binding</keyword>
<keyword id="KW-0547">Nucleotide-binding</keyword>
<keyword id="KW-0539">Nucleus</keyword>
<keyword id="KW-0597">Phosphoprotein</keyword>
<keyword id="KW-1185">Reference proteome</keyword>
<keyword id="KW-0677">Repeat</keyword>
<keyword id="KW-0770">Synapse</keyword>
<keyword id="KW-0808">Transferase</keyword>
<keyword id="KW-0862">Zinc</keyword>
<keyword id="KW-0863">Zinc-finger</keyword>